<keyword id="KW-0150">Chloroplast</keyword>
<keyword id="KW-0934">Plastid</keyword>
<keyword id="KW-0687">Ribonucleoprotein</keyword>
<keyword id="KW-0689">Ribosomal protein</keyword>
<keyword id="KW-0694">RNA-binding</keyword>
<keyword id="KW-0699">rRNA-binding</keyword>
<protein>
    <recommendedName>
        <fullName evidence="1">Large ribosomal subunit protein uL14c</fullName>
    </recommendedName>
    <alternativeName>
        <fullName evidence="2">50S ribosomal protein L14, chloroplastic</fullName>
    </alternativeName>
</protein>
<reference key="1">
    <citation type="journal article" date="2007" name="BMC Genomics">
        <title>Rapid evolutionary change of common bean (Phaseolus vulgaris L) plastome, and the genomic diversification of legume chloroplasts.</title>
        <authorList>
            <person name="Guo X."/>
            <person name="Castillo-Ramirez S."/>
            <person name="Gonzalez V."/>
            <person name="Bustos P."/>
            <person name="Fernandez-Vazquez J.L."/>
            <person name="Santamaria R.I."/>
            <person name="Arellano J."/>
            <person name="Cevallos M.A."/>
            <person name="Davila G."/>
        </authorList>
    </citation>
    <scope>NUCLEOTIDE SEQUENCE [LARGE SCALE GENOMIC DNA]</scope>
    <source>
        <strain>cv. Negro Jamapa</strain>
    </source>
</reference>
<reference key="2">
    <citation type="submission" date="2007-10" db="EMBL/GenBank/DDBJ databases">
        <title>Complete nucleotide sequence of the plastid genome of the common bean, Phaseolus vulgaris.</title>
        <authorList>
            <person name="Moore M.J."/>
            <person name="Triplett E.W."/>
            <person name="Broughton W.J."/>
            <person name="Soltis P.S."/>
            <person name="Soltis D.E."/>
        </authorList>
    </citation>
    <scope>NUCLEOTIDE SEQUENCE [LARGE SCALE GENOMIC DNA]</scope>
</reference>
<dbReference type="EMBL" id="DQ886273">
    <property type="protein sequence ID" value="ABH88067.1"/>
    <property type="molecule type" value="Genomic_DNA"/>
</dbReference>
<dbReference type="EMBL" id="EU196765">
    <property type="protein sequence ID" value="ABW22801.1"/>
    <property type="molecule type" value="Genomic_DNA"/>
</dbReference>
<dbReference type="RefSeq" id="YP_001122787.1">
    <property type="nucleotide sequence ID" value="NC_009259.1"/>
</dbReference>
<dbReference type="SMR" id="A4GG86"/>
<dbReference type="GeneID" id="4961754"/>
<dbReference type="KEGG" id="pvu:4961754"/>
<dbReference type="GO" id="GO:0009507">
    <property type="term" value="C:chloroplast"/>
    <property type="evidence" value="ECO:0007669"/>
    <property type="project" value="UniProtKB-SubCell"/>
</dbReference>
<dbReference type="GO" id="GO:0022625">
    <property type="term" value="C:cytosolic large ribosomal subunit"/>
    <property type="evidence" value="ECO:0007669"/>
    <property type="project" value="TreeGrafter"/>
</dbReference>
<dbReference type="GO" id="GO:0070180">
    <property type="term" value="F:large ribosomal subunit rRNA binding"/>
    <property type="evidence" value="ECO:0007669"/>
    <property type="project" value="TreeGrafter"/>
</dbReference>
<dbReference type="GO" id="GO:0003735">
    <property type="term" value="F:structural constituent of ribosome"/>
    <property type="evidence" value="ECO:0007669"/>
    <property type="project" value="InterPro"/>
</dbReference>
<dbReference type="GO" id="GO:0006412">
    <property type="term" value="P:translation"/>
    <property type="evidence" value="ECO:0007669"/>
    <property type="project" value="UniProtKB-UniRule"/>
</dbReference>
<dbReference type="CDD" id="cd00337">
    <property type="entry name" value="Ribosomal_uL14"/>
    <property type="match status" value="1"/>
</dbReference>
<dbReference type="FunFam" id="2.40.150.20:FF:000002">
    <property type="entry name" value="50S ribosomal protein L14, chloroplastic"/>
    <property type="match status" value="1"/>
</dbReference>
<dbReference type="Gene3D" id="2.40.150.20">
    <property type="entry name" value="Ribosomal protein L14"/>
    <property type="match status" value="1"/>
</dbReference>
<dbReference type="HAMAP" id="MF_01367">
    <property type="entry name" value="Ribosomal_uL14"/>
    <property type="match status" value="1"/>
</dbReference>
<dbReference type="InterPro" id="IPR000218">
    <property type="entry name" value="Ribosomal_uL14"/>
</dbReference>
<dbReference type="InterPro" id="IPR005745">
    <property type="entry name" value="Ribosomal_uL14_bac-type"/>
</dbReference>
<dbReference type="InterPro" id="IPR019972">
    <property type="entry name" value="Ribosomal_uL14_CS"/>
</dbReference>
<dbReference type="InterPro" id="IPR036853">
    <property type="entry name" value="Ribosomal_uL14_sf"/>
</dbReference>
<dbReference type="NCBIfam" id="TIGR01067">
    <property type="entry name" value="rplN_bact"/>
    <property type="match status" value="1"/>
</dbReference>
<dbReference type="PANTHER" id="PTHR11761">
    <property type="entry name" value="50S/60S RIBOSOMAL PROTEIN L14/L23"/>
    <property type="match status" value="1"/>
</dbReference>
<dbReference type="PANTHER" id="PTHR11761:SF27">
    <property type="entry name" value="LARGE RIBOSOMAL SUBUNIT PROTEIN UL14C"/>
    <property type="match status" value="1"/>
</dbReference>
<dbReference type="Pfam" id="PF00238">
    <property type="entry name" value="Ribosomal_L14"/>
    <property type="match status" value="1"/>
</dbReference>
<dbReference type="SMART" id="SM01374">
    <property type="entry name" value="Ribosomal_L14"/>
    <property type="match status" value="1"/>
</dbReference>
<dbReference type="SUPFAM" id="SSF50193">
    <property type="entry name" value="Ribosomal protein L14"/>
    <property type="match status" value="1"/>
</dbReference>
<dbReference type="PROSITE" id="PS00049">
    <property type="entry name" value="RIBOSOMAL_L14"/>
    <property type="match status" value="1"/>
</dbReference>
<organism>
    <name type="scientific">Phaseolus vulgaris</name>
    <name type="common">Kidney bean</name>
    <name type="synonym">French bean</name>
    <dbReference type="NCBI Taxonomy" id="3885"/>
    <lineage>
        <taxon>Eukaryota</taxon>
        <taxon>Viridiplantae</taxon>
        <taxon>Streptophyta</taxon>
        <taxon>Embryophyta</taxon>
        <taxon>Tracheophyta</taxon>
        <taxon>Spermatophyta</taxon>
        <taxon>Magnoliopsida</taxon>
        <taxon>eudicotyledons</taxon>
        <taxon>Gunneridae</taxon>
        <taxon>Pentapetalae</taxon>
        <taxon>rosids</taxon>
        <taxon>fabids</taxon>
        <taxon>Fabales</taxon>
        <taxon>Fabaceae</taxon>
        <taxon>Papilionoideae</taxon>
        <taxon>50 kb inversion clade</taxon>
        <taxon>NPAAA clade</taxon>
        <taxon>indigoferoid/millettioid clade</taxon>
        <taxon>Phaseoleae</taxon>
        <taxon>Phaseolus</taxon>
    </lineage>
</organism>
<geneLocation type="chloroplast"/>
<gene>
    <name evidence="1" type="primary">rpl14</name>
</gene>
<feature type="chain" id="PRO_0000355900" description="Large ribosomal subunit protein uL14c">
    <location>
        <begin position="1"/>
        <end position="122"/>
    </location>
</feature>
<name>RK14_PHAVU</name>
<proteinExistence type="inferred from homology"/>
<accession>A4GG86</accession>
<sequence>MIQPQTHLNVADNSGARKLMCIRILGASNRRYAYIGDIVVAVIKQAVPNTNLERSEVIRAVIVRTCKQLKRSNGIIIQYDDNAAVVIDQEGNPKGTRIFCAIARELRQLNFTKIVSLAPEVL</sequence>
<comment type="function">
    <text evidence="1">Binds to 23S rRNA.</text>
</comment>
<comment type="subunit">
    <text evidence="1">Part of the 50S ribosomal subunit.</text>
</comment>
<comment type="subcellular location">
    <subcellularLocation>
        <location>Plastid</location>
        <location>Chloroplast</location>
    </subcellularLocation>
</comment>
<comment type="similarity">
    <text evidence="1">Belongs to the universal ribosomal protein uL14 family.</text>
</comment>
<evidence type="ECO:0000255" key="1">
    <source>
        <dbReference type="HAMAP-Rule" id="MF_01367"/>
    </source>
</evidence>
<evidence type="ECO:0000305" key="2"/>